<gene>
    <name evidence="1" type="primary">greA</name>
    <name type="ordered locus">LACR_0660</name>
</gene>
<evidence type="ECO:0000255" key="1">
    <source>
        <dbReference type="HAMAP-Rule" id="MF_00105"/>
    </source>
</evidence>
<sequence>MEKTFPMTKEGLDKLKAELENLKLVKRPEVIDRIKVARSYGDLSENSEYEAAKDEQAFIEGRISTVETMIRYAEIVNNAKIAKDEVALGKNVTFVEVGETDEESYQIVGTAEADPFTGKISNESPIARVLIGKKVGDIVNVPLPVGEMTVKIVKVD</sequence>
<dbReference type="EMBL" id="CP000425">
    <property type="protein sequence ID" value="ABJ72225.1"/>
    <property type="molecule type" value="Genomic_DNA"/>
</dbReference>
<dbReference type="RefSeq" id="WP_011675777.1">
    <property type="nucleotide sequence ID" value="NC_008527.1"/>
</dbReference>
<dbReference type="SMR" id="Q030Z7"/>
<dbReference type="KEGG" id="llc:LACR_0660"/>
<dbReference type="HOGENOM" id="CLU_101379_2_1_9"/>
<dbReference type="Proteomes" id="UP000000240">
    <property type="component" value="Chromosome"/>
</dbReference>
<dbReference type="GO" id="GO:0003677">
    <property type="term" value="F:DNA binding"/>
    <property type="evidence" value="ECO:0007669"/>
    <property type="project" value="UniProtKB-UniRule"/>
</dbReference>
<dbReference type="GO" id="GO:0070063">
    <property type="term" value="F:RNA polymerase binding"/>
    <property type="evidence" value="ECO:0007669"/>
    <property type="project" value="InterPro"/>
</dbReference>
<dbReference type="GO" id="GO:0006354">
    <property type="term" value="P:DNA-templated transcription elongation"/>
    <property type="evidence" value="ECO:0007669"/>
    <property type="project" value="TreeGrafter"/>
</dbReference>
<dbReference type="GO" id="GO:0032784">
    <property type="term" value="P:regulation of DNA-templated transcription elongation"/>
    <property type="evidence" value="ECO:0007669"/>
    <property type="project" value="UniProtKB-UniRule"/>
</dbReference>
<dbReference type="FunFam" id="1.10.287.180:FF:000001">
    <property type="entry name" value="Transcription elongation factor GreA"/>
    <property type="match status" value="1"/>
</dbReference>
<dbReference type="FunFam" id="3.10.50.30:FF:000001">
    <property type="entry name" value="Transcription elongation factor GreA"/>
    <property type="match status" value="1"/>
</dbReference>
<dbReference type="Gene3D" id="3.10.50.30">
    <property type="entry name" value="Transcription elongation factor, GreA/GreB, C-terminal domain"/>
    <property type="match status" value="1"/>
</dbReference>
<dbReference type="Gene3D" id="1.10.287.180">
    <property type="entry name" value="Transcription elongation factor, GreA/GreB, N-terminal domain"/>
    <property type="match status" value="1"/>
</dbReference>
<dbReference type="HAMAP" id="MF_00105">
    <property type="entry name" value="GreA_GreB"/>
    <property type="match status" value="1"/>
</dbReference>
<dbReference type="InterPro" id="IPR036953">
    <property type="entry name" value="GreA/GreB_C_sf"/>
</dbReference>
<dbReference type="InterPro" id="IPR018151">
    <property type="entry name" value="TF_GreA/GreB_CS"/>
</dbReference>
<dbReference type="InterPro" id="IPR006359">
    <property type="entry name" value="Tscrpt_elong_fac_GreA"/>
</dbReference>
<dbReference type="InterPro" id="IPR028624">
    <property type="entry name" value="Tscrpt_elong_fac_GreA/B"/>
</dbReference>
<dbReference type="InterPro" id="IPR001437">
    <property type="entry name" value="Tscrpt_elong_fac_GreA/B_C"/>
</dbReference>
<dbReference type="InterPro" id="IPR023459">
    <property type="entry name" value="Tscrpt_elong_fac_GreA/B_fam"/>
</dbReference>
<dbReference type="InterPro" id="IPR022691">
    <property type="entry name" value="Tscrpt_elong_fac_GreA/B_N"/>
</dbReference>
<dbReference type="InterPro" id="IPR036805">
    <property type="entry name" value="Tscrpt_elong_fac_GreA/B_N_sf"/>
</dbReference>
<dbReference type="NCBIfam" id="TIGR01462">
    <property type="entry name" value="greA"/>
    <property type="match status" value="1"/>
</dbReference>
<dbReference type="NCBIfam" id="NF001260">
    <property type="entry name" value="PRK00226.1-1"/>
    <property type="match status" value="1"/>
</dbReference>
<dbReference type="NCBIfam" id="NF001261">
    <property type="entry name" value="PRK00226.1-2"/>
    <property type="match status" value="1"/>
</dbReference>
<dbReference type="NCBIfam" id="NF001263">
    <property type="entry name" value="PRK00226.1-4"/>
    <property type="match status" value="1"/>
</dbReference>
<dbReference type="PANTHER" id="PTHR30437">
    <property type="entry name" value="TRANSCRIPTION ELONGATION FACTOR GREA"/>
    <property type="match status" value="1"/>
</dbReference>
<dbReference type="PANTHER" id="PTHR30437:SF4">
    <property type="entry name" value="TRANSCRIPTION ELONGATION FACTOR GREA"/>
    <property type="match status" value="1"/>
</dbReference>
<dbReference type="Pfam" id="PF01272">
    <property type="entry name" value="GreA_GreB"/>
    <property type="match status" value="1"/>
</dbReference>
<dbReference type="Pfam" id="PF03449">
    <property type="entry name" value="GreA_GreB_N"/>
    <property type="match status" value="1"/>
</dbReference>
<dbReference type="PIRSF" id="PIRSF006092">
    <property type="entry name" value="GreA_GreB"/>
    <property type="match status" value="1"/>
</dbReference>
<dbReference type="SUPFAM" id="SSF54534">
    <property type="entry name" value="FKBP-like"/>
    <property type="match status" value="1"/>
</dbReference>
<dbReference type="SUPFAM" id="SSF46557">
    <property type="entry name" value="GreA transcript cleavage protein, N-terminal domain"/>
    <property type="match status" value="1"/>
</dbReference>
<dbReference type="PROSITE" id="PS00829">
    <property type="entry name" value="GREAB_1"/>
    <property type="match status" value="1"/>
</dbReference>
<name>GREA_LACLS</name>
<organism>
    <name type="scientific">Lactococcus lactis subsp. cremoris (strain SK11)</name>
    <dbReference type="NCBI Taxonomy" id="272622"/>
    <lineage>
        <taxon>Bacteria</taxon>
        <taxon>Bacillati</taxon>
        <taxon>Bacillota</taxon>
        <taxon>Bacilli</taxon>
        <taxon>Lactobacillales</taxon>
        <taxon>Streptococcaceae</taxon>
        <taxon>Lactococcus</taxon>
        <taxon>Lactococcus cremoris subsp. cremoris</taxon>
    </lineage>
</organism>
<reference key="1">
    <citation type="journal article" date="2006" name="Proc. Natl. Acad. Sci. U.S.A.">
        <title>Comparative genomics of the lactic acid bacteria.</title>
        <authorList>
            <person name="Makarova K.S."/>
            <person name="Slesarev A."/>
            <person name="Wolf Y.I."/>
            <person name="Sorokin A."/>
            <person name="Mirkin B."/>
            <person name="Koonin E.V."/>
            <person name="Pavlov A."/>
            <person name="Pavlova N."/>
            <person name="Karamychev V."/>
            <person name="Polouchine N."/>
            <person name="Shakhova V."/>
            <person name="Grigoriev I."/>
            <person name="Lou Y."/>
            <person name="Rohksar D."/>
            <person name="Lucas S."/>
            <person name="Huang K."/>
            <person name="Goodstein D.M."/>
            <person name="Hawkins T."/>
            <person name="Plengvidhya V."/>
            <person name="Welker D."/>
            <person name="Hughes J."/>
            <person name="Goh Y."/>
            <person name="Benson A."/>
            <person name="Baldwin K."/>
            <person name="Lee J.-H."/>
            <person name="Diaz-Muniz I."/>
            <person name="Dosti B."/>
            <person name="Smeianov V."/>
            <person name="Wechter W."/>
            <person name="Barabote R."/>
            <person name="Lorca G."/>
            <person name="Altermann E."/>
            <person name="Barrangou R."/>
            <person name="Ganesan B."/>
            <person name="Xie Y."/>
            <person name="Rawsthorne H."/>
            <person name="Tamir D."/>
            <person name="Parker C."/>
            <person name="Breidt F."/>
            <person name="Broadbent J.R."/>
            <person name="Hutkins R."/>
            <person name="O'Sullivan D."/>
            <person name="Steele J."/>
            <person name="Unlu G."/>
            <person name="Saier M.H. Jr."/>
            <person name="Klaenhammer T."/>
            <person name="Richardson P."/>
            <person name="Kozyavkin S."/>
            <person name="Weimer B.C."/>
            <person name="Mills D.A."/>
        </authorList>
    </citation>
    <scope>NUCLEOTIDE SEQUENCE [LARGE SCALE GENOMIC DNA]</scope>
    <source>
        <strain>SK11</strain>
    </source>
</reference>
<comment type="function">
    <text evidence="1">Necessary for efficient RNA polymerase transcription elongation past template-encoded arresting sites. The arresting sites in DNA have the property of trapping a certain fraction of elongating RNA polymerases that pass through, resulting in locked ternary complexes. Cleavage of the nascent transcript by cleavage factors such as GreA or GreB allows the resumption of elongation from the new 3'terminus. GreA releases sequences of 2 to 3 nucleotides.</text>
</comment>
<comment type="similarity">
    <text evidence="1">Belongs to the GreA/GreB family.</text>
</comment>
<feature type="chain" id="PRO_1000034268" description="Transcription elongation factor GreA">
    <location>
        <begin position="1"/>
        <end position="156"/>
    </location>
</feature>
<feature type="coiled-coil region" evidence="1">
    <location>
        <begin position="2"/>
        <end position="27"/>
    </location>
</feature>
<protein>
    <recommendedName>
        <fullName evidence="1">Transcription elongation factor GreA</fullName>
    </recommendedName>
    <alternativeName>
        <fullName evidence="1">Transcript cleavage factor GreA</fullName>
    </alternativeName>
</protein>
<proteinExistence type="inferred from homology"/>
<keyword id="KW-0175">Coiled coil</keyword>
<keyword id="KW-0238">DNA-binding</keyword>
<keyword id="KW-0804">Transcription</keyword>
<keyword id="KW-0805">Transcription regulation</keyword>
<accession>Q030Z7</accession>